<gene>
    <name evidence="1" type="primary">pstB2</name>
    <name type="ordered locus">VV2_1559</name>
</gene>
<dbReference type="EC" id="7.3.2.1" evidence="1"/>
<dbReference type="EMBL" id="AE016796">
    <property type="protein sequence ID" value="AAO08422.1"/>
    <property type="molecule type" value="Genomic_DNA"/>
</dbReference>
<dbReference type="SMR" id="Q8D3X4"/>
<dbReference type="KEGG" id="vvu:VV2_1559"/>
<dbReference type="HOGENOM" id="CLU_000604_1_22_6"/>
<dbReference type="Proteomes" id="UP000002275">
    <property type="component" value="Chromosome 2"/>
</dbReference>
<dbReference type="GO" id="GO:0005886">
    <property type="term" value="C:plasma membrane"/>
    <property type="evidence" value="ECO:0007669"/>
    <property type="project" value="UniProtKB-SubCell"/>
</dbReference>
<dbReference type="GO" id="GO:0005524">
    <property type="term" value="F:ATP binding"/>
    <property type="evidence" value="ECO:0007669"/>
    <property type="project" value="UniProtKB-KW"/>
</dbReference>
<dbReference type="GO" id="GO:0016887">
    <property type="term" value="F:ATP hydrolysis activity"/>
    <property type="evidence" value="ECO:0007669"/>
    <property type="project" value="InterPro"/>
</dbReference>
<dbReference type="GO" id="GO:0015415">
    <property type="term" value="F:ATPase-coupled phosphate ion transmembrane transporter activity"/>
    <property type="evidence" value="ECO:0007669"/>
    <property type="project" value="UniProtKB-EC"/>
</dbReference>
<dbReference type="GO" id="GO:0035435">
    <property type="term" value="P:phosphate ion transmembrane transport"/>
    <property type="evidence" value="ECO:0007669"/>
    <property type="project" value="InterPro"/>
</dbReference>
<dbReference type="CDD" id="cd03260">
    <property type="entry name" value="ABC_PstB_phosphate_transporter"/>
    <property type="match status" value="1"/>
</dbReference>
<dbReference type="FunFam" id="3.40.50.300:FF:000132">
    <property type="entry name" value="Phosphate import ATP-binding protein PstB"/>
    <property type="match status" value="1"/>
</dbReference>
<dbReference type="Gene3D" id="3.40.50.300">
    <property type="entry name" value="P-loop containing nucleotide triphosphate hydrolases"/>
    <property type="match status" value="1"/>
</dbReference>
<dbReference type="InterPro" id="IPR003593">
    <property type="entry name" value="AAA+_ATPase"/>
</dbReference>
<dbReference type="InterPro" id="IPR003439">
    <property type="entry name" value="ABC_transporter-like_ATP-bd"/>
</dbReference>
<dbReference type="InterPro" id="IPR017871">
    <property type="entry name" value="ABC_transporter-like_CS"/>
</dbReference>
<dbReference type="InterPro" id="IPR027417">
    <property type="entry name" value="P-loop_NTPase"/>
</dbReference>
<dbReference type="InterPro" id="IPR005670">
    <property type="entry name" value="PstB-like"/>
</dbReference>
<dbReference type="NCBIfam" id="TIGR00972">
    <property type="entry name" value="3a0107s01c2"/>
    <property type="match status" value="1"/>
</dbReference>
<dbReference type="PANTHER" id="PTHR43423">
    <property type="entry name" value="ABC TRANSPORTER I FAMILY MEMBER 17"/>
    <property type="match status" value="1"/>
</dbReference>
<dbReference type="PANTHER" id="PTHR43423:SF1">
    <property type="entry name" value="ABC TRANSPORTER I FAMILY MEMBER 17"/>
    <property type="match status" value="1"/>
</dbReference>
<dbReference type="Pfam" id="PF00005">
    <property type="entry name" value="ABC_tran"/>
    <property type="match status" value="1"/>
</dbReference>
<dbReference type="SMART" id="SM00382">
    <property type="entry name" value="AAA"/>
    <property type="match status" value="1"/>
</dbReference>
<dbReference type="SUPFAM" id="SSF52540">
    <property type="entry name" value="P-loop containing nucleoside triphosphate hydrolases"/>
    <property type="match status" value="1"/>
</dbReference>
<dbReference type="PROSITE" id="PS00211">
    <property type="entry name" value="ABC_TRANSPORTER_1"/>
    <property type="match status" value="1"/>
</dbReference>
<dbReference type="PROSITE" id="PS50893">
    <property type="entry name" value="ABC_TRANSPORTER_2"/>
    <property type="match status" value="1"/>
</dbReference>
<dbReference type="PROSITE" id="PS51238">
    <property type="entry name" value="PSTB"/>
    <property type="match status" value="1"/>
</dbReference>
<protein>
    <recommendedName>
        <fullName evidence="1">Phosphate import ATP-binding protein PstB 2</fullName>
        <ecNumber evidence="1">7.3.2.1</ecNumber>
    </recommendedName>
    <alternativeName>
        <fullName evidence="1">ABC phosphate transporter 2</fullName>
    </alternativeName>
    <alternativeName>
        <fullName evidence="1">Phosphate-transporting ATPase 2</fullName>
    </alternativeName>
</protein>
<accession>Q8D3X4</accession>
<sequence>MNKFDIENLDLYYGENQALKAINLPIPVRQVTALIGPSGCGKSTLLRCLNRMNDLIEGVKITGKLAMDGEDIYGNVDVADLRIKVGMVFQKPNPFPMSIYENVAYGLRAQGIKDKKHIDEVVERSLRGAALWDEVKDRLKSHAFGLSGGQQQRLCIARTIAMEPDVILMDEPTSALDPIATHKIEELMEELKKNYTIVIVTHSMQQARRISDRTAFFLMGELVEHNDTQVIFSEPSDDRTRGYVNGDFG</sequence>
<organism>
    <name type="scientific">Vibrio vulnificus (strain CMCP6)</name>
    <dbReference type="NCBI Taxonomy" id="216895"/>
    <lineage>
        <taxon>Bacteria</taxon>
        <taxon>Pseudomonadati</taxon>
        <taxon>Pseudomonadota</taxon>
        <taxon>Gammaproteobacteria</taxon>
        <taxon>Vibrionales</taxon>
        <taxon>Vibrionaceae</taxon>
        <taxon>Vibrio</taxon>
    </lineage>
</organism>
<comment type="function">
    <text evidence="1">Part of the ABC transporter complex PstSACB involved in phosphate import. Responsible for energy coupling to the transport system.</text>
</comment>
<comment type="catalytic activity">
    <reaction evidence="1">
        <text>phosphate(out) + ATP + H2O = ADP + 2 phosphate(in) + H(+)</text>
        <dbReference type="Rhea" id="RHEA:24440"/>
        <dbReference type="ChEBI" id="CHEBI:15377"/>
        <dbReference type="ChEBI" id="CHEBI:15378"/>
        <dbReference type="ChEBI" id="CHEBI:30616"/>
        <dbReference type="ChEBI" id="CHEBI:43474"/>
        <dbReference type="ChEBI" id="CHEBI:456216"/>
        <dbReference type="EC" id="7.3.2.1"/>
    </reaction>
</comment>
<comment type="subunit">
    <text evidence="1">The complex is composed of two ATP-binding proteins (PstB), two transmembrane proteins (PstC and PstA) and a solute-binding protein (PstS).</text>
</comment>
<comment type="subcellular location">
    <subcellularLocation>
        <location evidence="1">Cell inner membrane</location>
        <topology evidence="1">Peripheral membrane protein</topology>
    </subcellularLocation>
</comment>
<comment type="similarity">
    <text evidence="1">Belongs to the ABC transporter superfamily. Phosphate importer (TC 3.A.1.7) family.</text>
</comment>
<feature type="chain" id="PRO_0000092930" description="Phosphate import ATP-binding protein PstB 2">
    <location>
        <begin position="1"/>
        <end position="249"/>
    </location>
</feature>
<feature type="domain" description="ABC transporter" evidence="1">
    <location>
        <begin position="4"/>
        <end position="244"/>
    </location>
</feature>
<feature type="binding site" evidence="1">
    <location>
        <begin position="36"/>
        <end position="43"/>
    </location>
    <ligand>
        <name>ATP</name>
        <dbReference type="ChEBI" id="CHEBI:30616"/>
    </ligand>
</feature>
<reference key="1">
    <citation type="submission" date="2002-12" db="EMBL/GenBank/DDBJ databases">
        <title>Complete genome sequence of Vibrio vulnificus CMCP6.</title>
        <authorList>
            <person name="Rhee J.H."/>
            <person name="Kim S.Y."/>
            <person name="Chung S.S."/>
            <person name="Kim J.J."/>
            <person name="Moon Y.H."/>
            <person name="Jeong H."/>
            <person name="Choy H.E."/>
        </authorList>
    </citation>
    <scope>NUCLEOTIDE SEQUENCE [LARGE SCALE GENOMIC DNA]</scope>
    <source>
        <strain>CMCP6</strain>
    </source>
</reference>
<name>PSTB2_VIBVU</name>
<keyword id="KW-0067">ATP-binding</keyword>
<keyword id="KW-0997">Cell inner membrane</keyword>
<keyword id="KW-1003">Cell membrane</keyword>
<keyword id="KW-0472">Membrane</keyword>
<keyword id="KW-0547">Nucleotide-binding</keyword>
<keyword id="KW-0592">Phosphate transport</keyword>
<keyword id="KW-1278">Translocase</keyword>
<keyword id="KW-0813">Transport</keyword>
<evidence type="ECO:0000255" key="1">
    <source>
        <dbReference type="HAMAP-Rule" id="MF_01702"/>
    </source>
</evidence>
<proteinExistence type="inferred from homology"/>